<organism>
    <name type="scientific">Rotavirus A (strain RVA/Cow/France/RF/1975/G6P6[1])</name>
    <name type="common">RV-A</name>
    <dbReference type="NCBI Taxonomy" id="10933"/>
    <lineage>
        <taxon>Viruses</taxon>
        <taxon>Riboviria</taxon>
        <taxon>Orthornavirae</taxon>
        <taxon>Duplornaviricota</taxon>
        <taxon>Resentoviricetes</taxon>
        <taxon>Reovirales</taxon>
        <taxon>Sedoreoviridae</taxon>
        <taxon>Rotavirus</taxon>
        <taxon>Rotavirus A</taxon>
    </lineage>
</organism>
<protein>
    <recommendedName>
        <fullName evidence="1">Non-structural glycoprotein 4</fullName>
        <shortName evidence="1">NSP4</shortName>
    </recommendedName>
    <alternativeName>
        <fullName evidence="1">NCVP5</fullName>
    </alternativeName>
    <alternativeName>
        <fullName evidence="1">NS28</fullName>
    </alternativeName>
</protein>
<proteinExistence type="evidence at transcript level"/>
<accession>Q6YLV5</accession>
<keyword id="KW-1072">Activation of host autophagy by virus</keyword>
<keyword id="KW-0106">Calcium</keyword>
<keyword id="KW-0260">Enterotoxin</keyword>
<keyword id="KW-0325">Glycoprotein</keyword>
<keyword id="KW-1038">Host endoplasmic reticulum</keyword>
<keyword id="KW-1043">Host membrane</keyword>
<keyword id="KW-0945">Host-virus interaction</keyword>
<keyword id="KW-0407">Ion channel</keyword>
<keyword id="KW-0406">Ion transport</keyword>
<keyword id="KW-0472">Membrane</keyword>
<keyword id="KW-0479">Metal-binding</keyword>
<keyword id="KW-0964">Secreted</keyword>
<keyword id="KW-0735">Signal-anchor</keyword>
<keyword id="KW-0800">Toxin</keyword>
<keyword id="KW-0812">Transmembrane</keyword>
<keyword id="KW-1133">Transmembrane helix</keyword>
<keyword id="KW-0813">Transport</keyword>
<keyword id="KW-1182">Viral ion channel</keyword>
<keyword id="KW-0843">Virulence</keyword>
<reference key="1">
    <citation type="submission" date="2002-05" db="EMBL/GenBank/DDBJ databases">
        <title>Bovine rotavirus RF gene 10 encoding NSP4.</title>
        <authorList>
            <person name="Charpilienne A."/>
            <person name="Enouf V."/>
            <person name="Cohen J."/>
        </authorList>
    </citation>
    <scope>NUCLEOTIDE SEQUENCE [MRNA]</scope>
</reference>
<sequence length="175" mass="20380">MEKLTDLNYTSSVITLMNSTLHTILEDPGMAYFPYIASVLTVLFTLHKASIPTMKIALKTSKCSYKVVKYCIVTIFNTLLKLAGYKEQITTKDEIEKQMDRVVKEMRRQLEMIDKLTTREIEQVELLKRIHDKLMIRAVDEIDMTKEINQKNVRTLEEWENGKNPYEPKEVTAAM</sequence>
<feature type="chain" id="PRO_0000369473" description="Non-structural glycoprotein 4">
    <location>
        <begin position="1"/>
        <end position="175"/>
    </location>
</feature>
<feature type="topological domain" description="Lumenal" evidence="1">
    <location>
        <begin position="1"/>
        <end position="28"/>
    </location>
</feature>
<feature type="transmembrane region" description="Helical; Signal-anchor for type III membrane protein" evidence="1">
    <location>
        <begin position="29"/>
        <end position="51"/>
    </location>
</feature>
<feature type="topological domain" description="Cytoplasmic" evidence="1">
    <location>
        <begin position="52"/>
        <end position="175"/>
    </location>
</feature>
<feature type="binding site" evidence="1">
    <location>
        <position position="120"/>
    </location>
    <ligand>
        <name>Ca(2+)</name>
        <dbReference type="ChEBI" id="CHEBI:29108"/>
    </ligand>
</feature>
<feature type="binding site" evidence="1">
    <location>
        <position position="123"/>
    </location>
    <ligand>
        <name>Ca(2+)</name>
        <dbReference type="ChEBI" id="CHEBI:29108"/>
    </ligand>
</feature>
<feature type="glycosylation site" description="N-linked (GlcNAc...) asparagine; by host" evidence="1">
    <location>
        <position position="8"/>
    </location>
</feature>
<feature type="glycosylation site" description="N-linked (GlcNAc...) asparagine; by host" evidence="1">
    <location>
        <position position="18"/>
    </location>
</feature>
<comment type="function">
    <text evidence="1">Plays an essential role in the virus replication cycle by acting as a viroporin. Creates a pore in the host endoplasmic reticulum and as a consequence releases Ca(2+) in the cytoplasm of infected cell. In turn, high levels of cytoplasmic calcium trigger membrane trafficking and transport of viral ER-associated proteins to viroplasms, sites of viral genome replication and immature particle assembly.</text>
</comment>
<comment type="function">
    <text evidence="1">The secreted form acts as an enterotoxin that causes phospholipase C-dependent elevation of the intracellular calcium concentration in host intestinal mucosa cells. Increased concentration of intracellular calcium disrupts the cytoskeleton and the tight junctions, raising the paracellular permeability. Potentiates chloride ion secretion through a calcium ion-dependent signaling pathway, inducing age-dependent diarrhea. To perform this enterotoxigenic role in vivo, NSP4 is released from infected enterocytes in a soluble form capable of diffusing within the intestinal lumen and interacting with host plasma membrane receptors on neighboring epithelial cells such as integrins ITGA1/ITGB1 and ITGA2/ITGB1.</text>
</comment>
<comment type="subunit">
    <text evidence="1">Homotetramer. Interacts with the immature particle in the viroplasm. Interacts with host CAV1, early and late in infection. Interacts with host integrin ITGA1/ITGB1 heterodimer. Interacts with host integrin ITGA2/ITGB1 heterodimer. Interaction with microtubules blocks trafficking to the Golgi apparatus.</text>
</comment>
<comment type="subcellular location">
    <subcellularLocation>
        <location evidence="1">Host rough endoplasmic reticulum membrane</location>
        <topology evidence="1">Single-pass type III membrane protein</topology>
    </subcellularLocation>
    <subcellularLocation>
        <location evidence="1">Host membrane</location>
        <location evidence="1">Host caveola</location>
        <topology evidence="1">Single-pass type III membrane protein</topology>
    </subcellularLocation>
    <subcellularLocation>
        <location evidence="1">Secreted</location>
    </subcellularLocation>
    <text evidence="1">NSP4 also localizes in vesicular structures which contain autophagosomal markers and associate with viroplasms in virus-infected cells. Additionally, a soluble form of glycosylated NSP4 is secreted despite retention of its transmembrane domain.</text>
</comment>
<comment type="domain">
    <text evidence="1">Binds 1 calcium ion per tetramer.</text>
</comment>
<comment type="PTM">
    <text evidence="1">The N-glycosyl content is primarily Man(9)GlcNAc, with a small amount of Man(8)GlcNAc.</text>
</comment>
<comment type="similarity">
    <text evidence="1">Belongs to the rotavirus NSP4 family.</text>
</comment>
<name>NSP4_ROTRF</name>
<organismHost>
    <name type="scientific">Bos taurus</name>
    <name type="common">Bovine</name>
    <dbReference type="NCBI Taxonomy" id="9913"/>
</organismHost>
<dbReference type="EMBL" id="AY116593">
    <property type="protein sequence ID" value="AAM80569.1"/>
    <property type="molecule type" value="mRNA"/>
</dbReference>
<dbReference type="SMR" id="Q6YLV5"/>
<dbReference type="Proteomes" id="UP000007179">
    <property type="component" value="Genome"/>
</dbReference>
<dbReference type="GO" id="GO:0005576">
    <property type="term" value="C:extracellular region"/>
    <property type="evidence" value="ECO:0007669"/>
    <property type="project" value="UniProtKB-SubCell"/>
</dbReference>
<dbReference type="GO" id="GO:0044155">
    <property type="term" value="C:host caveola"/>
    <property type="evidence" value="ECO:0007669"/>
    <property type="project" value="UniProtKB-SubCell"/>
</dbReference>
<dbReference type="GO" id="GO:0044169">
    <property type="term" value="C:host cell rough endoplasmic reticulum membrane"/>
    <property type="evidence" value="ECO:0007669"/>
    <property type="project" value="UniProtKB-SubCell"/>
</dbReference>
<dbReference type="GO" id="GO:0016020">
    <property type="term" value="C:membrane"/>
    <property type="evidence" value="ECO:0007669"/>
    <property type="project" value="UniProtKB-UniRule"/>
</dbReference>
<dbReference type="GO" id="GO:0015267">
    <property type="term" value="F:channel activity"/>
    <property type="evidence" value="ECO:0007669"/>
    <property type="project" value="UniProtKB-KW"/>
</dbReference>
<dbReference type="GO" id="GO:0046872">
    <property type="term" value="F:metal ion binding"/>
    <property type="evidence" value="ECO:0007669"/>
    <property type="project" value="UniProtKB-UniRule"/>
</dbReference>
<dbReference type="GO" id="GO:0090729">
    <property type="term" value="F:toxin activity"/>
    <property type="evidence" value="ECO:0007669"/>
    <property type="project" value="UniProtKB-UniRule"/>
</dbReference>
<dbReference type="GO" id="GO:0034220">
    <property type="term" value="P:monoatomic ion transmembrane transport"/>
    <property type="evidence" value="ECO:0007669"/>
    <property type="project" value="UniProtKB-KW"/>
</dbReference>
<dbReference type="GO" id="GO:0039520">
    <property type="term" value="P:symbiont-mediated activation of host autophagy"/>
    <property type="evidence" value="ECO:0007669"/>
    <property type="project" value="UniProtKB-KW"/>
</dbReference>
<dbReference type="GO" id="GO:0016032">
    <property type="term" value="P:viral process"/>
    <property type="evidence" value="ECO:0007669"/>
    <property type="project" value="UniProtKB-UniRule"/>
</dbReference>
<dbReference type="Gene3D" id="1.20.5.430">
    <property type="match status" value="1"/>
</dbReference>
<dbReference type="HAMAP" id="MF_04091">
    <property type="entry name" value="ROTA_NSP4"/>
    <property type="match status" value="1"/>
</dbReference>
<dbReference type="InterPro" id="IPR002107">
    <property type="entry name" value="Rotavirus_NSP4"/>
</dbReference>
<dbReference type="Pfam" id="PF01452">
    <property type="entry name" value="Rota_NSP4"/>
    <property type="match status" value="1"/>
</dbReference>
<dbReference type="SUPFAM" id="SSF58030">
    <property type="entry name" value="Rotavirus nonstructural proteins"/>
    <property type="match status" value="1"/>
</dbReference>
<evidence type="ECO:0000255" key="1">
    <source>
        <dbReference type="HAMAP-Rule" id="MF_04091"/>
    </source>
</evidence>